<name>APVA_ASPTN</name>
<sequence>MTLNNLQALLRRVAAREDSGHVVVYGMGNTKAFKSYSYQDLLRVAIKASVALRKTSDLHPGSVILLHFDNHWDNIVWFWAASFAGCLPAISASFSNDASQRTAHIERLSTTLMHPLCLTNERIMADFAGQDAVQPLAVETLVLNGDVSFEALPQEHPEPSLSDDALLLFTSGSSGNSKGVCLSHGQILASISGKYAVRPLPDNTSFLNWVGLDHVAAIVEIHLQAMYALKTQVHVPAADILSSPATFLQLLEKHRVSRTFAPNFFLAKLRDLLQENDSLPEPRRWDLRSLEYVASGGEANVTKTCDRLSEYLVAFGAPKDVIVPGFGMTETCAGSIFNTRCPEYDKSRSAEFASVGTCMPGISMRVTDLSNNALPSGEIGHLQLTGPVVFKRYFNNTSATQEAFTPDGWFKTGDMGCIDENGCLTLTGRAKENMIINGVNHSPHEIETALDKIPGLTPSYSCCFSFFPSGGETEEICVVYLPTYSPDDLAARAQTADAISKTVLMSTGSRPHVLPLEREALPKSSLGKLSRAKIKAAYEKGEYATYQNANNELMRRYRESTRAEPQNDLEKTLLEVFTRSLSITDDAFDVKTPIFDVGINSVELIRLKRDIEDHLGMAASAIPMIMLMTHSTVRDLATALEKLQGPREYDPVVTLQSHGHKNPLWLVHPGAGEVLVFINLAQYIVDRPVYALRARGFNDGEQPFETIEEATASYYNGIRSRQPHGPYALAGYCYGSMLAFEVAKMLESHGEEVRFLGSFNLPPHIKMRMRELDWKECLLHLAYFLDLVSQERSREMSVELAGLSHDEILDSVIQNANMERYAELSLNRPLLVRWADVAYELHRMAFDYDPAGCVAGMDVFFSIPLAIAAASKTEWRNVHLSQWEDFTRTVPKFHDVAGEHYSMIGPDHVFSFQKTLRKALDERGM</sequence>
<reference key="1">
    <citation type="journal article" date="2018" name="Appl. Microbiol. Biotechnol.">
        <title>Production of alpha-keto carboxylic acid dimers in yeast by overexpression of NRPS-like genes from Aspergillus terreus.</title>
        <authorList>
            <person name="Huehner E."/>
            <person name="Backhaus K."/>
            <person name="Kraut R."/>
            <person name="Li S.M."/>
        </authorList>
    </citation>
    <scope>NUCLEOTIDE SEQUENCE [MRNA]</scope>
    <scope>DOMAIN</scope>
    <scope>FUNCTION</scope>
    <scope>CATALYTIC ACTIVITY</scope>
    <scope>PATHWAY</scope>
    <source>
        <strain>NIH 2624 / FGSC A1156</strain>
    </source>
</reference>
<reference key="2">
    <citation type="submission" date="2005-09" db="EMBL/GenBank/DDBJ databases">
        <title>Annotation of the Aspergillus terreus NIH2624 genome.</title>
        <authorList>
            <person name="Birren B.W."/>
            <person name="Lander E.S."/>
            <person name="Galagan J.E."/>
            <person name="Nusbaum C."/>
            <person name="Devon K."/>
            <person name="Henn M."/>
            <person name="Ma L.-J."/>
            <person name="Jaffe D.B."/>
            <person name="Butler J."/>
            <person name="Alvarez P."/>
            <person name="Gnerre S."/>
            <person name="Grabherr M."/>
            <person name="Kleber M."/>
            <person name="Mauceli E.W."/>
            <person name="Brockman W."/>
            <person name="Rounsley S."/>
            <person name="Young S.K."/>
            <person name="LaButti K."/>
            <person name="Pushparaj V."/>
            <person name="DeCaprio D."/>
            <person name="Crawford M."/>
            <person name="Koehrsen M."/>
            <person name="Engels R."/>
            <person name="Montgomery P."/>
            <person name="Pearson M."/>
            <person name="Howarth C."/>
            <person name="Larson L."/>
            <person name="Luoma S."/>
            <person name="White J."/>
            <person name="Alvarado L."/>
            <person name="Kodira C.D."/>
            <person name="Zeng Q."/>
            <person name="Oleary S."/>
            <person name="Yandava C."/>
            <person name="Denning D.W."/>
            <person name="Nierman W.C."/>
            <person name="Milne T."/>
            <person name="Madden K."/>
        </authorList>
    </citation>
    <scope>NUCLEOTIDE SEQUENCE [LARGE SCALE GENOMIC DNA]</scope>
    <source>
        <strain>NIH 2624 / FGSC A1156</strain>
    </source>
</reference>
<reference key="3">
    <citation type="journal article" date="2013" name="Org. Lett.">
        <title>Application of an efficient gene targeting system linking secondary metabolites to their biosynthetic genes in Aspergillus terreus.</title>
        <authorList>
            <person name="Guo C.J."/>
            <person name="Knox B.P."/>
            <person name="Sanchez J.F."/>
            <person name="Chiang Y.M."/>
            <person name="Bruno K.S."/>
            <person name="Wang C.C."/>
        </authorList>
    </citation>
    <scope>DOMAIN</scope>
    <scope>FUNCTION</scope>
    <scope>CATALYTIC ACTIVITY</scope>
    <scope>PATHWAY</scope>
</reference>
<reference key="4">
    <citation type="journal article" date="2015" name="Chem. Sci.">
        <title>Spatial regulation of a common precursor from two distinct genes generates metabolite diversity.</title>
        <authorList>
            <person name="Guo C.J."/>
            <person name="Sun W.W."/>
            <person name="Bruno K.S."/>
            <person name="Oakley B.R."/>
            <person name="Keller N.P."/>
            <person name="Wang C.C.C."/>
        </authorList>
    </citation>
    <scope>FUNCTION</scope>
    <scope>CATALYTIC ACTIVITY</scope>
    <scope>DISRUPTION PHENOTYPE</scope>
    <scope>TISSUE SPECIFICITY</scope>
    <scope>PATHWAY</scope>
</reference>
<gene>
    <name evidence="6" type="primary">apvA</name>
    <name type="ORF">ATEG_02004</name>
</gene>
<organism>
    <name type="scientific">Aspergillus terreus (strain NIH 2624 / FGSC A1156)</name>
    <dbReference type="NCBI Taxonomy" id="341663"/>
    <lineage>
        <taxon>Eukaryota</taxon>
        <taxon>Fungi</taxon>
        <taxon>Dikarya</taxon>
        <taxon>Ascomycota</taxon>
        <taxon>Pezizomycotina</taxon>
        <taxon>Eurotiomycetes</taxon>
        <taxon>Eurotiomycetidae</taxon>
        <taxon>Eurotiales</taxon>
        <taxon>Aspergillaceae</taxon>
        <taxon>Aspergillus</taxon>
        <taxon>Aspergillus subgen. Circumdati</taxon>
    </lineage>
</organism>
<feature type="chain" id="PRO_0000450543" description="Nonribosomal peptide synthetase apvA">
    <location>
        <begin position="1"/>
        <end position="925"/>
    </location>
</feature>
<feature type="domain" description="Carrier" evidence="2 8 9">
    <location>
        <begin position="564"/>
        <end position="644"/>
    </location>
</feature>
<feature type="region of interest" description="Adenylation (A) domain" evidence="1 8 9">
    <location>
        <begin position="15"/>
        <end position="436"/>
    </location>
</feature>
<feature type="region of interest" description="Thioesterase (TE) domain" evidence="1 8 9">
    <location>
        <begin position="663"/>
        <end position="909"/>
    </location>
</feature>
<feature type="modified residue" description="O-(pantetheine 4'-phosphoryl)serine" evidence="2">
    <location>
        <position position="601"/>
    </location>
</feature>
<accession>Q0CWD0</accession>
<accession>A0A2I6SS11</accession>
<keyword id="KW-0596">Phosphopantetheine</keyword>
<keyword id="KW-0597">Phosphoprotein</keyword>
<keyword id="KW-1185">Reference proteome</keyword>
<keyword id="KW-0808">Transferase</keyword>
<evidence type="ECO:0000255" key="1"/>
<evidence type="ECO:0000255" key="2">
    <source>
        <dbReference type="PROSITE-ProRule" id="PRU00258"/>
    </source>
</evidence>
<evidence type="ECO:0000269" key="3">
    <source>
    </source>
</evidence>
<evidence type="ECO:0000269" key="4">
    <source>
    </source>
</evidence>
<evidence type="ECO:0000269" key="5">
    <source>
    </source>
</evidence>
<evidence type="ECO:0000303" key="6">
    <source>
    </source>
</evidence>
<evidence type="ECO:0000305" key="7"/>
<evidence type="ECO:0000305" key="8">
    <source>
    </source>
</evidence>
<evidence type="ECO:0000305" key="9">
    <source>
    </source>
</evidence>
<protein>
    <recommendedName>
        <fullName evidence="6">Nonribosomal peptide synthetase apvA</fullName>
        <ecNumber evidence="3 4 5">2.3.1.-</ecNumber>
    </recommendedName>
    <alternativeName>
        <fullName evidence="6">Aspulvinone E synthase</fullName>
    </alternativeName>
</protein>
<proteinExistence type="evidence at protein level"/>
<comment type="function">
    <text evidence="3 4 5 8">Nonribosomal peptide synthetase; part of the gene cluster that mediates the biosynthesis of aspulvinones (PubMed:23841722, PubMed:28791090, PubMed:29305695). The nonribosomal peptide synthetase apvA is responsible for the production of aspulvinone E, the core structure of aspulvinones (PubMed:23841722, PubMed:28791090, PubMed:29305695). ApvA first activates 4-hydroxyphenylpyruvate (HPPA) through its A domain to AMP-HPPA (Probable). The HPPA unit is then loaded to the T domain and eventually transferred to the TE domain (Probable). Upon loading of another HPPA unit to the T domain, the TE domain promotes the enolate formation on the unit attached (Probable). The next step involves head to tail Claisen condensation, followed by the keto-enol tautermerization and a nucleophilic attack on the carbonyl carbon to yield the furanone partial structure (Probable). A spontaneous oxidation at the beta-carbon of the thioester might occur in aerobic condition (Probable). The TE domain then catalyzes the hydrolysis of the thioester, followed by spontaneous decarboxylation, dehydroxylation and keto-enol tautermerization to give the aspulvinone core (Probable). Aspulvinone E is highly unstable and converted to isoaspulvinone E in the presence of light (PubMed:29305695). The structural diversity of the aspulvinones suggests that other tailoring enzymes are involved and have still to be identified (Probable).</text>
</comment>
<comment type="catalytic activity">
    <reaction evidence="3 4 5">
        <text>2 3-(4-hydroxyphenyl)pyruvate + AH2 + 2 ATP + O2 = aspulvinone E + A + 2 AMP + CO2 + 2 diphosphate + H2O + H(+)</text>
        <dbReference type="Rhea" id="RHEA:63824"/>
        <dbReference type="ChEBI" id="CHEBI:13193"/>
        <dbReference type="ChEBI" id="CHEBI:15377"/>
        <dbReference type="ChEBI" id="CHEBI:15378"/>
        <dbReference type="ChEBI" id="CHEBI:15379"/>
        <dbReference type="ChEBI" id="CHEBI:16526"/>
        <dbReference type="ChEBI" id="CHEBI:17499"/>
        <dbReference type="ChEBI" id="CHEBI:30616"/>
        <dbReference type="ChEBI" id="CHEBI:33019"/>
        <dbReference type="ChEBI" id="CHEBI:36242"/>
        <dbReference type="ChEBI" id="CHEBI:58240"/>
        <dbReference type="ChEBI" id="CHEBI:456215"/>
    </reaction>
    <physiologicalReaction direction="left-to-right" evidence="3 4 5">
        <dbReference type="Rhea" id="RHEA:63825"/>
    </physiologicalReaction>
</comment>
<comment type="pathway">
    <text evidence="3 4 5">Secondary metabolite biosynthesis.</text>
</comment>
<comment type="tissue specificity">
    <text evidence="4">ApvA specifically produces aspulvinone E in hyphea, in contrast to melA which produces aspulvinone E in conidia where it is converted to UV-protective Asp-melanin.</text>
</comment>
<comment type="domain">
    <text evidence="8 9">ApvA has an A-T-TE domain architecture (Probable). The adenylation (A) domain recognizes and activates the aryl acid substrates, and loads them onto the thiolation (T) domain (Probable). The thioesterase (TE) domain shares the missing condensation (C) domain function, and is responsible for condensation and final product release (Probable).</text>
</comment>
<comment type="disruption phenotype">
    <text evidence="4">Abolishes the production of aspulvinone E in hyphae, but not in conidia.</text>
</comment>
<comment type="similarity">
    <text evidence="7">Belongs to the NRP synthetase family.</text>
</comment>
<comment type="sequence caution" evidence="7">
    <conflict type="erroneous gene model prediction">
        <sequence resource="EMBL-CDS" id="EAU36966"/>
    </conflict>
</comment>
<dbReference type="EC" id="2.3.1.-" evidence="3 4 5"/>
<dbReference type="EMBL" id="MG384312">
    <property type="protein sequence ID" value="AUO29222.1"/>
    <property type="molecule type" value="mRNA"/>
</dbReference>
<dbReference type="EMBL" id="CH476596">
    <property type="protein sequence ID" value="EAU36966.1"/>
    <property type="status" value="ALT_SEQ"/>
    <property type="molecule type" value="Genomic_DNA"/>
</dbReference>
<dbReference type="RefSeq" id="XP_001211182.1">
    <property type="nucleotide sequence ID" value="XM_001211182.1"/>
</dbReference>
<dbReference type="SMR" id="Q0CWD0"/>
<dbReference type="STRING" id="341663.Q0CWD0"/>
<dbReference type="ESTHER" id="asptn-apva">
    <property type="family name" value="Thioesterase"/>
</dbReference>
<dbReference type="EnsemblFungi" id="EAU36966">
    <property type="protein sequence ID" value="EAU36966"/>
    <property type="gene ID" value="ATEG_02004"/>
</dbReference>
<dbReference type="GeneID" id="4316643"/>
<dbReference type="eggNOG" id="KOG1176">
    <property type="taxonomic scope" value="Eukaryota"/>
</dbReference>
<dbReference type="eggNOG" id="KOG1202">
    <property type="taxonomic scope" value="Eukaryota"/>
</dbReference>
<dbReference type="HOGENOM" id="CLU_000022_23_6_1"/>
<dbReference type="OrthoDB" id="10253869at2759"/>
<dbReference type="Proteomes" id="UP000007963">
    <property type="component" value="Unassembled WGS sequence"/>
</dbReference>
<dbReference type="GO" id="GO:0016740">
    <property type="term" value="F:transferase activity"/>
    <property type="evidence" value="ECO:0007669"/>
    <property type="project" value="UniProtKB-KW"/>
</dbReference>
<dbReference type="GO" id="GO:0031957">
    <property type="term" value="F:very long-chain fatty acid-CoA ligase activity"/>
    <property type="evidence" value="ECO:0007669"/>
    <property type="project" value="TreeGrafter"/>
</dbReference>
<dbReference type="GO" id="GO:0006633">
    <property type="term" value="P:fatty acid biosynthetic process"/>
    <property type="evidence" value="ECO:0007669"/>
    <property type="project" value="TreeGrafter"/>
</dbReference>
<dbReference type="Gene3D" id="3.30.300.30">
    <property type="match status" value="1"/>
</dbReference>
<dbReference type="Gene3D" id="1.10.1200.10">
    <property type="entry name" value="ACP-like"/>
    <property type="match status" value="1"/>
</dbReference>
<dbReference type="Gene3D" id="3.40.50.1820">
    <property type="entry name" value="alpha/beta hydrolase"/>
    <property type="match status" value="1"/>
</dbReference>
<dbReference type="Gene3D" id="3.40.50.12780">
    <property type="entry name" value="N-terminal domain of ligase-like"/>
    <property type="match status" value="1"/>
</dbReference>
<dbReference type="InterPro" id="IPR029058">
    <property type="entry name" value="AB_hydrolase_fold"/>
</dbReference>
<dbReference type="InterPro" id="IPR036736">
    <property type="entry name" value="ACP-like_sf"/>
</dbReference>
<dbReference type="InterPro" id="IPR045851">
    <property type="entry name" value="AMP-bd_C_sf"/>
</dbReference>
<dbReference type="InterPro" id="IPR020845">
    <property type="entry name" value="AMP-binding_CS"/>
</dbReference>
<dbReference type="InterPro" id="IPR000873">
    <property type="entry name" value="AMP-dep_synth/lig_dom"/>
</dbReference>
<dbReference type="InterPro" id="IPR042099">
    <property type="entry name" value="ANL_N_sf"/>
</dbReference>
<dbReference type="InterPro" id="IPR009081">
    <property type="entry name" value="PP-bd_ACP"/>
</dbReference>
<dbReference type="InterPro" id="IPR001031">
    <property type="entry name" value="Thioesterase"/>
</dbReference>
<dbReference type="PANTHER" id="PTHR24096">
    <property type="entry name" value="LONG-CHAIN-FATTY-ACID--COA LIGASE"/>
    <property type="match status" value="1"/>
</dbReference>
<dbReference type="PANTHER" id="PTHR24096:SF267">
    <property type="entry name" value="MALONATE--COA LIGASE ACSF3, MITOCHONDRIAL"/>
    <property type="match status" value="1"/>
</dbReference>
<dbReference type="Pfam" id="PF00501">
    <property type="entry name" value="AMP-binding"/>
    <property type="match status" value="1"/>
</dbReference>
<dbReference type="Pfam" id="PF00550">
    <property type="entry name" value="PP-binding"/>
    <property type="match status" value="1"/>
</dbReference>
<dbReference type="Pfam" id="PF00975">
    <property type="entry name" value="Thioesterase"/>
    <property type="match status" value="1"/>
</dbReference>
<dbReference type="SUPFAM" id="SSF56801">
    <property type="entry name" value="Acetyl-CoA synthetase-like"/>
    <property type="match status" value="1"/>
</dbReference>
<dbReference type="SUPFAM" id="SSF47336">
    <property type="entry name" value="ACP-like"/>
    <property type="match status" value="1"/>
</dbReference>
<dbReference type="SUPFAM" id="SSF53474">
    <property type="entry name" value="alpha/beta-Hydrolases"/>
    <property type="match status" value="1"/>
</dbReference>
<dbReference type="PROSITE" id="PS00455">
    <property type="entry name" value="AMP_BINDING"/>
    <property type="match status" value="1"/>
</dbReference>
<dbReference type="PROSITE" id="PS50075">
    <property type="entry name" value="CARRIER"/>
    <property type="match status" value="1"/>
</dbReference>